<reference key="1">
    <citation type="journal article" date="2008" name="J. Bacteriol.">
        <title>Complete genome sequence of uropathogenic Proteus mirabilis, a master of both adherence and motility.</title>
        <authorList>
            <person name="Pearson M.M."/>
            <person name="Sebaihia M."/>
            <person name="Churcher C."/>
            <person name="Quail M.A."/>
            <person name="Seshasayee A.S."/>
            <person name="Luscombe N.M."/>
            <person name="Abdellah Z."/>
            <person name="Arrosmith C."/>
            <person name="Atkin B."/>
            <person name="Chillingworth T."/>
            <person name="Hauser H."/>
            <person name="Jagels K."/>
            <person name="Moule S."/>
            <person name="Mungall K."/>
            <person name="Norbertczak H."/>
            <person name="Rabbinowitsch E."/>
            <person name="Walker D."/>
            <person name="Whithead S."/>
            <person name="Thomson N.R."/>
            <person name="Rather P.N."/>
            <person name="Parkhill J."/>
            <person name="Mobley H.L.T."/>
        </authorList>
    </citation>
    <scope>NUCLEOTIDE SEQUENCE [LARGE SCALE GENOMIC DNA]</scope>
    <source>
        <strain>HI4320</strain>
    </source>
</reference>
<organism>
    <name type="scientific">Proteus mirabilis (strain HI4320)</name>
    <dbReference type="NCBI Taxonomy" id="529507"/>
    <lineage>
        <taxon>Bacteria</taxon>
        <taxon>Pseudomonadati</taxon>
        <taxon>Pseudomonadota</taxon>
        <taxon>Gammaproteobacteria</taxon>
        <taxon>Enterobacterales</taxon>
        <taxon>Morganellaceae</taxon>
        <taxon>Proteus</taxon>
    </lineage>
</organism>
<name>ERPA_PROMH</name>
<proteinExistence type="inferred from homology"/>
<keyword id="KW-0408">Iron</keyword>
<keyword id="KW-0411">Iron-sulfur</keyword>
<keyword id="KW-0479">Metal-binding</keyword>
<keyword id="KW-1185">Reference proteome</keyword>
<sequence length="114" mass="12221">MSDDMALPLQFTDAAANKVKDLIADEENPNLRLRVYITGGGCSGFQYGFTFDDAMNEGDMTIEKQGVALVIDPMSLQYLVGGCVDYTEGLEGSRFIVTNPNAKSTCGCGSSFSI</sequence>
<feature type="chain" id="PRO_1000144924" description="Iron-sulfur cluster insertion protein ErpA">
    <location>
        <begin position="1"/>
        <end position="114"/>
    </location>
</feature>
<feature type="binding site" evidence="1">
    <location>
        <position position="42"/>
    </location>
    <ligand>
        <name>iron-sulfur cluster</name>
        <dbReference type="ChEBI" id="CHEBI:30408"/>
    </ligand>
</feature>
<feature type="binding site" evidence="1">
    <location>
        <position position="106"/>
    </location>
    <ligand>
        <name>iron-sulfur cluster</name>
        <dbReference type="ChEBI" id="CHEBI:30408"/>
    </ligand>
</feature>
<feature type="binding site" evidence="1">
    <location>
        <position position="108"/>
    </location>
    <ligand>
        <name>iron-sulfur cluster</name>
        <dbReference type="ChEBI" id="CHEBI:30408"/>
    </ligand>
</feature>
<gene>
    <name evidence="1" type="primary">erpA</name>
    <name type="ordered locus">PMI0206</name>
</gene>
<dbReference type="EMBL" id="AM942759">
    <property type="protein sequence ID" value="CAR40598.1"/>
    <property type="molecule type" value="Genomic_DNA"/>
</dbReference>
<dbReference type="RefSeq" id="WP_004244992.1">
    <property type="nucleotide sequence ID" value="NC_010554.1"/>
</dbReference>
<dbReference type="SMR" id="B4EUE2"/>
<dbReference type="EnsemblBacteria" id="CAR40598">
    <property type="protein sequence ID" value="CAR40598"/>
    <property type="gene ID" value="PMI0206"/>
</dbReference>
<dbReference type="GeneID" id="6801793"/>
<dbReference type="KEGG" id="pmr:PMI0206"/>
<dbReference type="eggNOG" id="COG0316">
    <property type="taxonomic scope" value="Bacteria"/>
</dbReference>
<dbReference type="HOGENOM" id="CLU_069054_5_3_6"/>
<dbReference type="Proteomes" id="UP000008319">
    <property type="component" value="Chromosome"/>
</dbReference>
<dbReference type="GO" id="GO:0005829">
    <property type="term" value="C:cytosol"/>
    <property type="evidence" value="ECO:0007669"/>
    <property type="project" value="TreeGrafter"/>
</dbReference>
<dbReference type="GO" id="GO:0051537">
    <property type="term" value="F:2 iron, 2 sulfur cluster binding"/>
    <property type="evidence" value="ECO:0007669"/>
    <property type="project" value="TreeGrafter"/>
</dbReference>
<dbReference type="GO" id="GO:0051539">
    <property type="term" value="F:4 iron, 4 sulfur cluster binding"/>
    <property type="evidence" value="ECO:0007669"/>
    <property type="project" value="TreeGrafter"/>
</dbReference>
<dbReference type="GO" id="GO:0005506">
    <property type="term" value="F:iron ion binding"/>
    <property type="evidence" value="ECO:0007669"/>
    <property type="project" value="UniProtKB-UniRule"/>
</dbReference>
<dbReference type="GO" id="GO:0016226">
    <property type="term" value="P:iron-sulfur cluster assembly"/>
    <property type="evidence" value="ECO:0007669"/>
    <property type="project" value="UniProtKB-UniRule"/>
</dbReference>
<dbReference type="FunFam" id="2.60.300.12:FF:000002">
    <property type="entry name" value="Iron-sulfur cluster insertion protein ErpA"/>
    <property type="match status" value="1"/>
</dbReference>
<dbReference type="Gene3D" id="2.60.300.12">
    <property type="entry name" value="HesB-like domain"/>
    <property type="match status" value="1"/>
</dbReference>
<dbReference type="HAMAP" id="MF_01380">
    <property type="entry name" value="Fe_S_insert_ErpA"/>
    <property type="match status" value="1"/>
</dbReference>
<dbReference type="InterPro" id="IPR000361">
    <property type="entry name" value="FeS_biogenesis"/>
</dbReference>
<dbReference type="InterPro" id="IPR016092">
    <property type="entry name" value="FeS_cluster_insertion"/>
</dbReference>
<dbReference type="InterPro" id="IPR017870">
    <property type="entry name" value="FeS_cluster_insertion_CS"/>
</dbReference>
<dbReference type="InterPro" id="IPR023063">
    <property type="entry name" value="FeS_cluster_insertion_RrpA"/>
</dbReference>
<dbReference type="InterPro" id="IPR035903">
    <property type="entry name" value="HesB-like_dom_sf"/>
</dbReference>
<dbReference type="NCBIfam" id="TIGR00049">
    <property type="entry name" value="iron-sulfur cluster assembly accessory protein"/>
    <property type="match status" value="1"/>
</dbReference>
<dbReference type="NCBIfam" id="NF010147">
    <property type="entry name" value="PRK13623.1"/>
    <property type="match status" value="1"/>
</dbReference>
<dbReference type="PANTHER" id="PTHR43011">
    <property type="entry name" value="IRON-SULFUR CLUSTER ASSEMBLY 2 HOMOLOG, MITOCHONDRIAL"/>
    <property type="match status" value="1"/>
</dbReference>
<dbReference type="PANTHER" id="PTHR43011:SF1">
    <property type="entry name" value="IRON-SULFUR CLUSTER ASSEMBLY 2 HOMOLOG, MITOCHONDRIAL"/>
    <property type="match status" value="1"/>
</dbReference>
<dbReference type="Pfam" id="PF01521">
    <property type="entry name" value="Fe-S_biosyn"/>
    <property type="match status" value="1"/>
</dbReference>
<dbReference type="SUPFAM" id="SSF89360">
    <property type="entry name" value="HesB-like domain"/>
    <property type="match status" value="1"/>
</dbReference>
<dbReference type="PROSITE" id="PS01152">
    <property type="entry name" value="HESB"/>
    <property type="match status" value="1"/>
</dbReference>
<protein>
    <recommendedName>
        <fullName evidence="1">Iron-sulfur cluster insertion protein ErpA</fullName>
    </recommendedName>
</protein>
<comment type="function">
    <text evidence="1">Required for insertion of 4Fe-4S clusters for at least IspG.</text>
</comment>
<comment type="cofactor">
    <cofactor evidence="1">
        <name>iron-sulfur cluster</name>
        <dbReference type="ChEBI" id="CHEBI:30408"/>
    </cofactor>
    <text evidence="1">Binds 1 iron-sulfur cluster per subunit.</text>
</comment>
<comment type="subunit">
    <text evidence="1">Homodimer.</text>
</comment>
<comment type="similarity">
    <text evidence="1">Belongs to the HesB/IscA family.</text>
</comment>
<accession>B4EUE2</accession>
<evidence type="ECO:0000255" key="1">
    <source>
        <dbReference type="HAMAP-Rule" id="MF_01380"/>
    </source>
</evidence>